<proteinExistence type="evidence at protein level"/>
<feature type="chain" id="PRO_0000083305" description="Trypsin inhibitor A chain">
    <location>
        <begin position="1"/>
        <end position="20" status="greater than"/>
    </location>
</feature>
<feature type="non-terminal residue">
    <location>
        <position position="20"/>
    </location>
</feature>
<keyword id="KW-0903">Direct protein sequencing</keyword>
<keyword id="KW-1015">Disulfide bond</keyword>
<keyword id="KW-0646">Protease inhibitor</keyword>
<keyword id="KW-0722">Serine protease inhibitor</keyword>
<evidence type="ECO:0000305" key="1"/>
<comment type="function">
    <text>Inhibits trypsin and alpha-chymotrypsin.</text>
</comment>
<comment type="subunit">
    <text>Heterodimer of an 'A' and a 'B' chain linked by a disulfide bond.</text>
</comment>
<comment type="similarity">
    <text evidence="1">Belongs to the protease inhibitor I3 (leguminous Kunitz-type inhibitor) family.</text>
</comment>
<protein>
    <recommendedName>
        <fullName>Trypsin inhibitor A chain</fullName>
    </recommendedName>
</protein>
<organism>
    <name type="scientific">Albizia julibrissin</name>
    <name type="common">Silk tree</name>
    <dbReference type="NCBI Taxonomy" id="3813"/>
    <lineage>
        <taxon>Eukaryota</taxon>
        <taxon>Viridiplantae</taxon>
        <taxon>Streptophyta</taxon>
        <taxon>Embryophyta</taxon>
        <taxon>Tracheophyta</taxon>
        <taxon>Spermatophyta</taxon>
        <taxon>Magnoliopsida</taxon>
        <taxon>eudicotyledons</taxon>
        <taxon>Gunneridae</taxon>
        <taxon>Pentapetalae</taxon>
        <taxon>rosids</taxon>
        <taxon>fabids</taxon>
        <taxon>Fabales</taxon>
        <taxon>Fabaceae</taxon>
        <taxon>Caesalpinioideae</taxon>
        <taxon>mimosoid clade</taxon>
        <taxon>Ingeae</taxon>
        <taxon>Albizia</taxon>
    </lineage>
</organism>
<name>ITRA_ALBJU</name>
<dbReference type="GO" id="GO:0004867">
    <property type="term" value="F:serine-type endopeptidase inhibitor activity"/>
    <property type="evidence" value="ECO:0007669"/>
    <property type="project" value="UniProtKB-KW"/>
</dbReference>
<dbReference type="InterPro" id="IPR002160">
    <property type="entry name" value="Prot_inh_Kunz-lg"/>
</dbReference>
<dbReference type="PROSITE" id="PS00283">
    <property type="entry name" value="SOYBEAN_KUNITZ"/>
    <property type="match status" value="1"/>
</dbReference>
<sequence>KELLDADGDILLNGGXYYIV</sequence>
<reference key="1">
    <citation type="journal article" date="1979" name="J. Biochem.">
        <title>Proteinase inhibitors from a mimosoideae legume, Albizzia julibrissin. Homologues of soybean trypsin inhibitor (Kunitz).</title>
        <authorList>
            <person name="Odani S."/>
            <person name="Ono T."/>
            <person name="Ikenaka T."/>
        </authorList>
    </citation>
    <scope>PROTEIN SEQUENCE</scope>
    <source>
        <tissue>Seed</tissue>
    </source>
</reference>
<accession>P24925</accession>